<name>ALL5_APIGR</name>
<feature type="chain" id="PRO_0000128175" description="Allergen Api g 5">
    <location>
        <begin position="1"/>
        <end position="86" status="greater than"/>
    </location>
</feature>
<feature type="glycosylation site" description="N-linked (GlcNAc...) asparagine" evidence="4">
    <location>
        <position position="62"/>
    </location>
</feature>
<feature type="non-consecutive residues" evidence="5">
    <location>
        <begin position="22"/>
        <end position="23"/>
    </location>
</feature>
<feature type="non-consecutive residues" evidence="5">
    <location>
        <begin position="52"/>
        <end position="53"/>
    </location>
</feature>
<feature type="non-consecutive residues" evidence="5">
    <location>
        <begin position="76"/>
        <end position="77"/>
    </location>
</feature>
<feature type="non-terminal residue" evidence="5">
    <location>
        <position position="86"/>
    </location>
</feature>
<proteinExistence type="evidence at protein level"/>
<reference evidence="6" key="1">
    <citation type="journal article" date="2000" name="Clin. Exp. Allergy">
        <title>N-terminal sequences of high molecular weight allergens from celery tuber.</title>
        <authorList>
            <person name="Ganglberger E."/>
            <person name="Radauer C."/>
            <person name="Grimm R."/>
            <person name="Hoffmann-Sommergruber K."/>
            <person name="Breiteneder H."/>
            <person name="Scheiner O."/>
            <person name="Jensen-Jarolim E."/>
        </authorList>
    </citation>
    <scope>PROTEIN SEQUENCE OF 1-18</scope>
    <scope>ALLERGEN</scope>
    <source>
        <tissue evidence="3">Tuber</tissue>
    </source>
</reference>
<reference evidence="6" key="2">
    <citation type="journal article" date="2003" name="FASEB J.">
        <title>Cross-reactive N-glycans of Api g 5, a high molecular weight glycoprotein allergen from celery, are required for immunoglobulin E binding and activation of effector cells from allergic patients.</title>
        <authorList>
            <person name="Bublin M."/>
            <person name="Radauer C."/>
            <person name="Wilson I.B.H."/>
            <person name="Kraft D."/>
            <person name="Scheiner O."/>
            <person name="Breiteneder H."/>
            <person name="Hoffmann-Sommergruber K."/>
        </authorList>
    </citation>
    <scope>PROTEIN SEQUENCE OF 19-86</scope>
    <scope>SEQUENCE REVISION</scope>
    <scope>GLYCOSYLATION</scope>
    <scope>ALLERGEN</scope>
    <source>
        <tissue evidence="4">Tuber</tissue>
    </source>
</reference>
<accession>P81943</accession>
<organism>
    <name type="scientific">Apium graveolens</name>
    <name type="common">Celery</name>
    <dbReference type="NCBI Taxonomy" id="4045"/>
    <lineage>
        <taxon>Eukaryota</taxon>
        <taxon>Viridiplantae</taxon>
        <taxon>Streptophyta</taxon>
        <taxon>Embryophyta</taxon>
        <taxon>Tracheophyta</taxon>
        <taxon>Spermatophyta</taxon>
        <taxon>Magnoliopsida</taxon>
        <taxon>eudicotyledons</taxon>
        <taxon>Gunneridae</taxon>
        <taxon>Pentapetalae</taxon>
        <taxon>asterids</taxon>
        <taxon>campanulids</taxon>
        <taxon>Apiales</taxon>
        <taxon>Apiaceae</taxon>
        <taxon>Apioideae</taxon>
        <taxon>apioid superclade</taxon>
        <taxon>Apieae</taxon>
        <taxon>Apium</taxon>
    </lineage>
</organism>
<sequence>LPNPSGFVTCLSSISKSVYTPAINLKAVIADPVAKTAVVQAGATLGEVYYXIIYARVLWVGNTTQKLEWIRSLHDYQSSFFPFFSA</sequence>
<comment type="cofactor">
    <cofactor evidence="1">
        <name>FAD</name>
        <dbReference type="ChEBI" id="CHEBI:57692"/>
    </cofactor>
</comment>
<comment type="PTM">
    <text evidence="4">Carries MUXF and MMXF, two complex N-linked glycans with alpha-1,3-fucose and beta-1,2-xylose residues in their structures. MMXF is added to Asn-62.</text>
</comment>
<comment type="allergen">
    <text evidence="3 4">Causes an allergic reaction in human. Binds to IgE. The glycan moiety seems to constitute the relevant allergenic epitope.</text>
</comment>
<comment type="similarity">
    <text evidence="2">Belongs to the oxygen-dependent FAD-linked oxidoreductase family.</text>
</comment>
<comment type="caution">
    <text evidence="4">The order of the peptides shown is unknown.</text>
</comment>
<evidence type="ECO:0000250" key="1">
    <source>
        <dbReference type="UniProtKB" id="P93479"/>
    </source>
</evidence>
<evidence type="ECO:0000255" key="2"/>
<evidence type="ECO:0000269" key="3">
    <source>
    </source>
</evidence>
<evidence type="ECO:0000269" key="4">
    <source>
    </source>
</evidence>
<evidence type="ECO:0000303" key="5">
    <source>
    </source>
</evidence>
<evidence type="ECO:0000305" key="6"/>
<keyword id="KW-0020">Allergen</keyword>
<keyword id="KW-0903">Direct protein sequencing</keyword>
<keyword id="KW-0274">FAD</keyword>
<keyword id="KW-0285">Flavoprotein</keyword>
<keyword id="KW-0325">Glycoprotein</keyword>
<keyword id="KW-0560">Oxidoreductase</keyword>
<dbReference type="Allergome" id="3087">
    <property type="allergen name" value="Api g 5.0101"/>
</dbReference>
<dbReference type="Allergome" id="44">
    <property type="allergen name" value="Api g 5"/>
</dbReference>
<dbReference type="iPTMnet" id="P81943"/>
<dbReference type="GO" id="GO:0016491">
    <property type="term" value="F:oxidoreductase activity"/>
    <property type="evidence" value="ECO:0007669"/>
    <property type="project" value="UniProtKB-KW"/>
</dbReference>
<protein>
    <recommendedName>
        <fullName>Allergen Api g 5</fullName>
    </recommendedName>
    <allergenName>Api g 5</allergenName>
</protein>